<accession>Q982Z8</accession>
<proteinExistence type="inferred from homology"/>
<dbReference type="EC" id="2.3.1.180" evidence="1"/>
<dbReference type="EMBL" id="BA000012">
    <property type="protein sequence ID" value="BAB54308.1"/>
    <property type="molecule type" value="Genomic_DNA"/>
</dbReference>
<dbReference type="RefSeq" id="WP_010915608.1">
    <property type="nucleotide sequence ID" value="NC_002678.2"/>
</dbReference>
<dbReference type="SMR" id="Q982Z8"/>
<dbReference type="KEGG" id="mlo:mlr8424"/>
<dbReference type="PATRIC" id="fig|266835.9.peg.6737"/>
<dbReference type="eggNOG" id="COG0332">
    <property type="taxonomic scope" value="Bacteria"/>
</dbReference>
<dbReference type="HOGENOM" id="CLU_039592_3_1_5"/>
<dbReference type="UniPathway" id="UPA00094"/>
<dbReference type="Proteomes" id="UP000000552">
    <property type="component" value="Chromosome"/>
</dbReference>
<dbReference type="GO" id="GO:0005737">
    <property type="term" value="C:cytoplasm"/>
    <property type="evidence" value="ECO:0007669"/>
    <property type="project" value="UniProtKB-SubCell"/>
</dbReference>
<dbReference type="GO" id="GO:0004315">
    <property type="term" value="F:3-oxoacyl-[acyl-carrier-protein] synthase activity"/>
    <property type="evidence" value="ECO:0007669"/>
    <property type="project" value="InterPro"/>
</dbReference>
<dbReference type="GO" id="GO:0033818">
    <property type="term" value="F:beta-ketoacyl-acyl-carrier-protein synthase III activity"/>
    <property type="evidence" value="ECO:0007669"/>
    <property type="project" value="UniProtKB-UniRule"/>
</dbReference>
<dbReference type="GO" id="GO:0006633">
    <property type="term" value="P:fatty acid biosynthetic process"/>
    <property type="evidence" value="ECO:0007669"/>
    <property type="project" value="UniProtKB-UniRule"/>
</dbReference>
<dbReference type="CDD" id="cd00830">
    <property type="entry name" value="KAS_III"/>
    <property type="match status" value="1"/>
</dbReference>
<dbReference type="FunFam" id="3.40.47.10:FF:000004">
    <property type="entry name" value="3-oxoacyl-[acyl-carrier-protein] synthase 3"/>
    <property type="match status" value="1"/>
</dbReference>
<dbReference type="Gene3D" id="3.40.47.10">
    <property type="match status" value="1"/>
</dbReference>
<dbReference type="HAMAP" id="MF_01815">
    <property type="entry name" value="FabH"/>
    <property type="match status" value="1"/>
</dbReference>
<dbReference type="InterPro" id="IPR013747">
    <property type="entry name" value="ACP_syn_III_C"/>
</dbReference>
<dbReference type="InterPro" id="IPR013751">
    <property type="entry name" value="ACP_syn_III_N"/>
</dbReference>
<dbReference type="InterPro" id="IPR004655">
    <property type="entry name" value="FabH"/>
</dbReference>
<dbReference type="InterPro" id="IPR016039">
    <property type="entry name" value="Thiolase-like"/>
</dbReference>
<dbReference type="NCBIfam" id="TIGR00747">
    <property type="entry name" value="fabH"/>
    <property type="match status" value="1"/>
</dbReference>
<dbReference type="NCBIfam" id="NF006829">
    <property type="entry name" value="PRK09352.1"/>
    <property type="match status" value="1"/>
</dbReference>
<dbReference type="PANTHER" id="PTHR43091">
    <property type="entry name" value="3-OXOACYL-[ACYL-CARRIER-PROTEIN] SYNTHASE"/>
    <property type="match status" value="1"/>
</dbReference>
<dbReference type="PANTHER" id="PTHR43091:SF1">
    <property type="entry name" value="BETA-KETOACYL-[ACYL-CARRIER-PROTEIN] SYNTHASE III, CHLOROPLASTIC"/>
    <property type="match status" value="1"/>
</dbReference>
<dbReference type="Pfam" id="PF08545">
    <property type="entry name" value="ACP_syn_III"/>
    <property type="match status" value="1"/>
</dbReference>
<dbReference type="Pfam" id="PF08541">
    <property type="entry name" value="ACP_syn_III_C"/>
    <property type="match status" value="1"/>
</dbReference>
<dbReference type="SUPFAM" id="SSF53901">
    <property type="entry name" value="Thiolase-like"/>
    <property type="match status" value="1"/>
</dbReference>
<sequence length="323" mass="34054">MIRSVVRGMGAALPRRIMKNADFEGMVETSDEWIVQRTGIRQRHIAADDETTASLGEAAARAALANAGLTPGDIDLIVLATSTPNNTFPATAVEIQNRLGMHHGFAFDMQAVCSGFVYAVTTADLYIRGGLAKRVLVIGSETFSRILDWNDRSTCVLFGDGAGALILEAGEGAGTIADRGVLAASLRSDGVHKDKLFVDGGPSTTGTVGHLRMEGREVFKHAVGMITDVIEATFSAAGISADDLDWFVPHQANKRIIDASAKKLGIAEQKVVVTVDLHGNTSAASVPLALSVAVADGRIKKGDLVLLEAMGGGFTWGAVLVRW</sequence>
<evidence type="ECO:0000255" key="1">
    <source>
        <dbReference type="HAMAP-Rule" id="MF_01815"/>
    </source>
</evidence>
<reference key="1">
    <citation type="journal article" date="2000" name="DNA Res.">
        <title>Complete genome structure of the nitrogen-fixing symbiotic bacterium Mesorhizobium loti.</title>
        <authorList>
            <person name="Kaneko T."/>
            <person name="Nakamura Y."/>
            <person name="Sato S."/>
            <person name="Asamizu E."/>
            <person name="Kato T."/>
            <person name="Sasamoto S."/>
            <person name="Watanabe A."/>
            <person name="Idesawa K."/>
            <person name="Ishikawa A."/>
            <person name="Kawashima K."/>
            <person name="Kimura T."/>
            <person name="Kishida Y."/>
            <person name="Kiyokawa C."/>
            <person name="Kohara M."/>
            <person name="Matsumoto M."/>
            <person name="Matsuno A."/>
            <person name="Mochizuki Y."/>
            <person name="Nakayama S."/>
            <person name="Nakazaki N."/>
            <person name="Shimpo S."/>
            <person name="Sugimoto M."/>
            <person name="Takeuchi C."/>
            <person name="Yamada M."/>
            <person name="Tabata S."/>
        </authorList>
    </citation>
    <scope>NUCLEOTIDE SEQUENCE [LARGE SCALE GENOMIC DNA]</scope>
    <source>
        <strain>LMG 29417 / CECT 9101 / MAFF 303099</strain>
    </source>
</reference>
<name>FABH_RHILO</name>
<keyword id="KW-0012">Acyltransferase</keyword>
<keyword id="KW-0963">Cytoplasm</keyword>
<keyword id="KW-0275">Fatty acid biosynthesis</keyword>
<keyword id="KW-0276">Fatty acid metabolism</keyword>
<keyword id="KW-0444">Lipid biosynthesis</keyword>
<keyword id="KW-0443">Lipid metabolism</keyword>
<keyword id="KW-0511">Multifunctional enzyme</keyword>
<keyword id="KW-0808">Transferase</keyword>
<gene>
    <name evidence="1" type="primary">fabH</name>
    <name type="ordered locus">mlr8424</name>
</gene>
<protein>
    <recommendedName>
        <fullName evidence="1">Beta-ketoacyl-[acyl-carrier-protein] synthase III</fullName>
        <shortName evidence="1">Beta-ketoacyl-ACP synthase III</shortName>
        <shortName evidence="1">KAS III</shortName>
        <ecNumber evidence="1">2.3.1.180</ecNumber>
    </recommendedName>
    <alternativeName>
        <fullName evidence="1">3-oxoacyl-[acyl-carrier-protein] synthase 3</fullName>
    </alternativeName>
    <alternativeName>
        <fullName evidence="1">3-oxoacyl-[acyl-carrier-protein] synthase III</fullName>
    </alternativeName>
</protein>
<feature type="chain" id="PRO_0000110457" description="Beta-ketoacyl-[acyl-carrier-protein] synthase III">
    <location>
        <begin position="1"/>
        <end position="323"/>
    </location>
</feature>
<feature type="region of interest" description="ACP-binding" evidence="1">
    <location>
        <begin position="251"/>
        <end position="255"/>
    </location>
</feature>
<feature type="active site" evidence="1">
    <location>
        <position position="113"/>
    </location>
</feature>
<feature type="active site" evidence="1">
    <location>
        <position position="250"/>
    </location>
</feature>
<feature type="active site" evidence="1">
    <location>
        <position position="280"/>
    </location>
</feature>
<organism>
    <name type="scientific">Mesorhizobium japonicum (strain LMG 29417 / CECT 9101 / MAFF 303099)</name>
    <name type="common">Mesorhizobium loti (strain MAFF 303099)</name>
    <dbReference type="NCBI Taxonomy" id="266835"/>
    <lineage>
        <taxon>Bacteria</taxon>
        <taxon>Pseudomonadati</taxon>
        <taxon>Pseudomonadota</taxon>
        <taxon>Alphaproteobacteria</taxon>
        <taxon>Hyphomicrobiales</taxon>
        <taxon>Phyllobacteriaceae</taxon>
        <taxon>Mesorhizobium</taxon>
    </lineage>
</organism>
<comment type="function">
    <text evidence="1">Catalyzes the condensation reaction of fatty acid synthesis by the addition to an acyl acceptor of two carbons from malonyl-ACP. Catalyzes the first condensation reaction which initiates fatty acid synthesis and may therefore play a role in governing the total rate of fatty acid production. Possesses both acetoacetyl-ACP synthase and acetyl transacylase activities. Its substrate specificity determines the biosynthesis of branched-chain and/or straight-chain of fatty acids.</text>
</comment>
<comment type="catalytic activity">
    <reaction evidence="1">
        <text>malonyl-[ACP] + acetyl-CoA + H(+) = 3-oxobutanoyl-[ACP] + CO2 + CoA</text>
        <dbReference type="Rhea" id="RHEA:12080"/>
        <dbReference type="Rhea" id="RHEA-COMP:9623"/>
        <dbReference type="Rhea" id="RHEA-COMP:9625"/>
        <dbReference type="ChEBI" id="CHEBI:15378"/>
        <dbReference type="ChEBI" id="CHEBI:16526"/>
        <dbReference type="ChEBI" id="CHEBI:57287"/>
        <dbReference type="ChEBI" id="CHEBI:57288"/>
        <dbReference type="ChEBI" id="CHEBI:78449"/>
        <dbReference type="ChEBI" id="CHEBI:78450"/>
        <dbReference type="EC" id="2.3.1.180"/>
    </reaction>
</comment>
<comment type="pathway">
    <text evidence="1">Lipid metabolism; fatty acid biosynthesis.</text>
</comment>
<comment type="subunit">
    <text evidence="1">Homodimer.</text>
</comment>
<comment type="subcellular location">
    <subcellularLocation>
        <location evidence="1">Cytoplasm</location>
    </subcellularLocation>
</comment>
<comment type="domain">
    <text evidence="1">The last Arg residue of the ACP-binding site is essential for the weak association between ACP/AcpP and FabH.</text>
</comment>
<comment type="similarity">
    <text evidence="1">Belongs to the thiolase-like superfamily. FabH family.</text>
</comment>